<evidence type="ECO:0000250" key="1">
    <source>
        <dbReference type="UniProtKB" id="P16332"/>
    </source>
</evidence>
<evidence type="ECO:0000250" key="2">
    <source>
        <dbReference type="UniProtKB" id="P22033"/>
    </source>
</evidence>
<evidence type="ECO:0000255" key="3"/>
<evidence type="ECO:0000255" key="4">
    <source>
        <dbReference type="PROSITE-ProRule" id="PRU00666"/>
    </source>
</evidence>
<evidence type="ECO:0000305" key="5"/>
<organism>
    <name type="scientific">Bos taurus</name>
    <name type="common">Bovine</name>
    <dbReference type="NCBI Taxonomy" id="9913"/>
    <lineage>
        <taxon>Eukaryota</taxon>
        <taxon>Metazoa</taxon>
        <taxon>Chordata</taxon>
        <taxon>Craniata</taxon>
        <taxon>Vertebrata</taxon>
        <taxon>Euteleostomi</taxon>
        <taxon>Mammalia</taxon>
        <taxon>Eutheria</taxon>
        <taxon>Laurasiatheria</taxon>
        <taxon>Artiodactyla</taxon>
        <taxon>Ruminantia</taxon>
        <taxon>Pecora</taxon>
        <taxon>Bovidae</taxon>
        <taxon>Bovinae</taxon>
        <taxon>Bos</taxon>
    </lineage>
</organism>
<gene>
    <name type="primary">MMUT</name>
    <name type="synonym">MCM</name>
    <name type="synonym">MUT</name>
</gene>
<feature type="transit peptide" description="Mitochondrion" evidence="3">
    <location>
        <begin position="1"/>
        <end position="32"/>
    </location>
</feature>
<feature type="chain" id="PRO_5000066791" description="Methylmalonyl-CoA mutase, mitochondrial">
    <location>
        <begin position="33"/>
        <end position="750"/>
    </location>
</feature>
<feature type="domain" description="B12-binding" evidence="4">
    <location>
        <begin position="614"/>
        <end position="746"/>
    </location>
</feature>
<feature type="binding site" evidence="2">
    <location>
        <position position="50"/>
    </location>
    <ligand>
        <name>malonyl-CoA</name>
        <dbReference type="ChEBI" id="CHEBI:57384"/>
    </ligand>
</feature>
<feature type="binding site" evidence="2">
    <location>
        <begin position="96"/>
        <end position="99"/>
    </location>
    <ligand>
        <name>malonyl-CoA</name>
        <dbReference type="ChEBI" id="CHEBI:57384"/>
    </ligand>
</feature>
<feature type="binding site" evidence="2">
    <location>
        <begin position="106"/>
        <end position="110"/>
    </location>
    <ligand>
        <name>malonyl-CoA</name>
        <dbReference type="ChEBI" id="CHEBI:57384"/>
    </ligand>
</feature>
<feature type="binding site" evidence="2">
    <location>
        <begin position="216"/>
        <end position="218"/>
    </location>
    <ligand>
        <name>malonyl-CoA</name>
        <dbReference type="ChEBI" id="CHEBI:57384"/>
    </ligand>
</feature>
<feature type="binding site" evidence="2">
    <location>
        <position position="228"/>
    </location>
    <ligand>
        <name>malonyl-CoA</name>
        <dbReference type="ChEBI" id="CHEBI:57384"/>
    </ligand>
</feature>
<feature type="binding site" evidence="2">
    <location>
        <position position="255"/>
    </location>
    <ligand>
        <name>malonyl-CoA</name>
        <dbReference type="ChEBI" id="CHEBI:57384"/>
    </ligand>
</feature>
<feature type="binding site" evidence="2">
    <location>
        <position position="265"/>
    </location>
    <ligand>
        <name>malonyl-CoA</name>
        <dbReference type="ChEBI" id="CHEBI:57384"/>
    </ligand>
</feature>
<feature type="binding site" evidence="2">
    <location>
        <begin position="304"/>
        <end position="306"/>
    </location>
    <ligand>
        <name>malonyl-CoA</name>
        <dbReference type="ChEBI" id="CHEBI:57384"/>
    </ligand>
</feature>
<feature type="binding site" description="axial binding residue" evidence="2">
    <location>
        <position position="627"/>
    </location>
    <ligand>
        <name>adenosylcob(III)alamin</name>
        <dbReference type="ChEBI" id="CHEBI:18408"/>
    </ligand>
    <ligandPart>
        <name>Co</name>
        <dbReference type="ChEBI" id="CHEBI:27638"/>
    </ligandPart>
</feature>
<feature type="modified residue" description="N6-acetyllysine" evidence="1">
    <location>
        <position position="89"/>
    </location>
</feature>
<feature type="modified residue" description="N6-acetyllysine" evidence="1">
    <location>
        <position position="212"/>
    </location>
</feature>
<feature type="modified residue" description="N6-acetyllysine" evidence="1">
    <location>
        <position position="335"/>
    </location>
</feature>
<feature type="modified residue" description="N6-succinyllysine" evidence="1">
    <location>
        <position position="343"/>
    </location>
</feature>
<feature type="modified residue" description="Phosphoserine" evidence="2">
    <location>
        <position position="481"/>
    </location>
</feature>
<feature type="modified residue" description="N6-succinyllysine" evidence="1">
    <location>
        <position position="595"/>
    </location>
</feature>
<feature type="modified residue" description="N6-acetyllysine" evidence="1">
    <location>
        <position position="602"/>
    </location>
</feature>
<keyword id="KW-0007">Acetylation</keyword>
<keyword id="KW-0846">Cobalamin</keyword>
<keyword id="KW-0170">Cobalt</keyword>
<keyword id="KW-0963">Cytoplasm</keyword>
<keyword id="KW-0413">Isomerase</keyword>
<keyword id="KW-0479">Metal-binding</keyword>
<keyword id="KW-0496">Mitochondrion</keyword>
<keyword id="KW-0597">Phosphoprotein</keyword>
<keyword id="KW-1185">Reference proteome</keyword>
<keyword id="KW-0809">Transit peptide</keyword>
<comment type="function">
    <text evidence="2">Catalyzes the reversible isomerization of methylmalonyl-CoA (MMCoA) (generated from branched-chain amino acid metabolism and degradation of dietary odd chain fatty acids and cholesterol) to succinyl-CoA (3-carboxypropionyl-CoA), a key intermediate of the tricarboxylic acid cycle.</text>
</comment>
<comment type="catalytic activity">
    <reaction evidence="2">
        <text>(R)-methylmalonyl-CoA = succinyl-CoA</text>
        <dbReference type="Rhea" id="RHEA:22888"/>
        <dbReference type="ChEBI" id="CHEBI:57292"/>
        <dbReference type="ChEBI" id="CHEBI:57326"/>
        <dbReference type="EC" id="5.4.99.2"/>
    </reaction>
    <physiologicalReaction direction="left-to-right" evidence="2">
        <dbReference type="Rhea" id="RHEA:22889"/>
    </physiologicalReaction>
</comment>
<comment type="cofactor">
    <cofactor evidence="2">
        <name>adenosylcob(III)alamin</name>
        <dbReference type="ChEBI" id="CHEBI:18408"/>
    </cofactor>
</comment>
<comment type="activity regulation">
    <text evidence="2">Inhibited by itaconyl-CoA, a metabolite that inactivates the coenzyme B12 cofactor.</text>
</comment>
<comment type="subunit">
    <text evidence="2">Homodimer. Interacts (the apoenzyme form) with MMAA; the interaction is GTP dependent.</text>
</comment>
<comment type="subcellular location">
    <subcellularLocation>
        <location evidence="2">Mitochondrion matrix</location>
    </subcellularLocation>
    <subcellularLocation>
        <location evidence="2">Mitochondrion</location>
    </subcellularLocation>
    <subcellularLocation>
        <location evidence="2">Cytoplasm</location>
    </subcellularLocation>
</comment>
<comment type="similarity">
    <text evidence="5">Belongs to the methylmalonyl-CoA mutase family.</text>
</comment>
<sequence length="750" mass="83235">MLRAKNQLFLLSPHYLRQVKESSGSRLIQQRLLHQQQPLHPEWAALAKKQLKGKNPEDLIWHTPEGISIKPLYSKRDTMDLPEELPGVKPFTRGPYPTMYTFRPWTIRQYAGFSTVEESNKFYKDNIKAGQQGLSVAFDLATHRGYDSDNPRLRGDVGMAGVAIDTVEDTKILFDGIPLEKMSVSMTMNGAVIPVLATFIVTGEEQGVPKEKLTGTIQNDILKEFMVRNTYIFPPEPSMKIIADIFQYTAKHMPKFNSISISGYHMQEAGADAILELAYTIADGLEYCRTGLQAGLTIDEFAPRLSFFWGIGMNFYMEIAKMRAGRRLWAHLIEKMLQPKNSKSLLLRAHCQTSGWSLTEQDPYNNIIRTTIEAMAAVFGGTQSLHTNSFDEALGLPTVKSARIARNTQIIIQEESGIPKVADPWGGSYMMESLTNDIYDAALKLINEIEEMGGMAKAVAEGIPKLRIEECAARRQARIDSGSEVIVGVNKYQLEKEESVDVLAIDNTSVRNKQIEKLKKVKSSRDQALAERCLDALTACAASGDGNILALAVDATRARCTVGEITYAMKKVFGEHKANDRMVSGAYRQEFGESKEIAFAIKRVEKFMEREGRRPRLLVAKMGQDGHDRGAKVIATGFADLGFDVDIGPLFQTPREVAQQAVDADVHTVGVSTLAAGHKTLVPELIKELNALGRPDILVMCGGVIPPQDYEFLFEVGVSNVFGPGTRIPKAAVQVLDDIEKCLEKKQQSI</sequence>
<dbReference type="EC" id="5.4.99.2" evidence="2"/>
<dbReference type="EMBL" id="AJ300476">
    <property type="protein sequence ID" value="CAC17595.1"/>
    <property type="molecule type" value="mRNA"/>
</dbReference>
<dbReference type="SMR" id="Q9GK13"/>
<dbReference type="FunCoup" id="Q9GK13">
    <property type="interactions" value="503"/>
</dbReference>
<dbReference type="STRING" id="9913.ENSBTAP00000058317"/>
<dbReference type="PaxDb" id="9913-ENSBTAP00000018963"/>
<dbReference type="PeptideAtlas" id="Q9GK13"/>
<dbReference type="eggNOG" id="ENOG502QQ7X">
    <property type="taxonomic scope" value="Eukaryota"/>
</dbReference>
<dbReference type="InParanoid" id="Q9GK13"/>
<dbReference type="OrthoDB" id="10035089at2759"/>
<dbReference type="Proteomes" id="UP000009136">
    <property type="component" value="Unplaced"/>
</dbReference>
<dbReference type="GO" id="GO:0005737">
    <property type="term" value="C:cytoplasm"/>
    <property type="evidence" value="ECO:0000318"/>
    <property type="project" value="GO_Central"/>
</dbReference>
<dbReference type="GO" id="GO:0005759">
    <property type="term" value="C:mitochondrial matrix"/>
    <property type="evidence" value="ECO:0000250"/>
    <property type="project" value="UniProtKB"/>
</dbReference>
<dbReference type="GO" id="GO:0005739">
    <property type="term" value="C:mitochondrion"/>
    <property type="evidence" value="ECO:0000318"/>
    <property type="project" value="GO_Central"/>
</dbReference>
<dbReference type="GO" id="GO:0031419">
    <property type="term" value="F:cobalamin binding"/>
    <property type="evidence" value="ECO:0000250"/>
    <property type="project" value="UniProtKB"/>
</dbReference>
<dbReference type="GO" id="GO:0003924">
    <property type="term" value="F:GTPase activity"/>
    <property type="evidence" value="ECO:0000250"/>
    <property type="project" value="UniProtKB"/>
</dbReference>
<dbReference type="GO" id="GO:0042802">
    <property type="term" value="F:identical protein binding"/>
    <property type="evidence" value="ECO:0000250"/>
    <property type="project" value="UniProtKB"/>
</dbReference>
<dbReference type="GO" id="GO:0046872">
    <property type="term" value="F:metal ion binding"/>
    <property type="evidence" value="ECO:0007669"/>
    <property type="project" value="UniProtKB-KW"/>
</dbReference>
<dbReference type="GO" id="GO:0004494">
    <property type="term" value="F:methylmalonyl-CoA mutase activity"/>
    <property type="evidence" value="ECO:0000250"/>
    <property type="project" value="UniProtKB"/>
</dbReference>
<dbReference type="GO" id="GO:0042803">
    <property type="term" value="F:protein homodimerization activity"/>
    <property type="evidence" value="ECO:0000250"/>
    <property type="project" value="UniProtKB"/>
</dbReference>
<dbReference type="GO" id="GO:0019678">
    <property type="term" value="P:propionate metabolic process, methylmalonyl pathway"/>
    <property type="evidence" value="ECO:0000318"/>
    <property type="project" value="GO_Central"/>
</dbReference>
<dbReference type="GO" id="GO:0006790">
    <property type="term" value="P:sulfur compound metabolic process"/>
    <property type="evidence" value="ECO:0007669"/>
    <property type="project" value="UniProtKB-ARBA"/>
</dbReference>
<dbReference type="CDD" id="cd02071">
    <property type="entry name" value="MM_CoA_mut_B12_BD"/>
    <property type="match status" value="1"/>
</dbReference>
<dbReference type="CDD" id="cd03679">
    <property type="entry name" value="MM_CoA_mutase_alpha_like"/>
    <property type="match status" value="1"/>
</dbReference>
<dbReference type="FunFam" id="3.20.20.240:FF:000002">
    <property type="entry name" value="Methylmalonyl-CoA mutase, mitochondrial"/>
    <property type="match status" value="1"/>
</dbReference>
<dbReference type="FunFam" id="3.40.50.280:FF:000002">
    <property type="entry name" value="Methylmalonyl-CoA mutase, mitochondrial"/>
    <property type="match status" value="1"/>
</dbReference>
<dbReference type="Gene3D" id="3.40.50.280">
    <property type="entry name" value="Cobalamin-binding domain"/>
    <property type="match status" value="1"/>
</dbReference>
<dbReference type="Gene3D" id="3.20.20.240">
    <property type="entry name" value="Methylmalonyl-CoA mutase"/>
    <property type="match status" value="1"/>
</dbReference>
<dbReference type="InterPro" id="IPR006159">
    <property type="entry name" value="Acid_CoA_mut_C"/>
</dbReference>
<dbReference type="InterPro" id="IPR016176">
    <property type="entry name" value="Cbl-dep_enz_cat"/>
</dbReference>
<dbReference type="InterPro" id="IPR006158">
    <property type="entry name" value="Cobalamin-bd"/>
</dbReference>
<dbReference type="InterPro" id="IPR036724">
    <property type="entry name" value="Cobalamin-bd_sf"/>
</dbReference>
<dbReference type="InterPro" id="IPR006099">
    <property type="entry name" value="MeMalonylCoA_mutase_a/b_cat"/>
</dbReference>
<dbReference type="InterPro" id="IPR006098">
    <property type="entry name" value="MMCoA_mutase_a_cat"/>
</dbReference>
<dbReference type="NCBIfam" id="TIGR00640">
    <property type="entry name" value="acid_CoA_mut_C"/>
    <property type="match status" value="1"/>
</dbReference>
<dbReference type="NCBIfam" id="TIGR00641">
    <property type="entry name" value="acid_CoA_mut_N"/>
    <property type="match status" value="1"/>
</dbReference>
<dbReference type="NCBIfam" id="NF006944">
    <property type="entry name" value="PRK09426.1"/>
    <property type="match status" value="1"/>
</dbReference>
<dbReference type="PANTHER" id="PTHR48101:SF4">
    <property type="entry name" value="METHYLMALONYL-COA MUTASE, MITOCHONDRIAL"/>
    <property type="match status" value="1"/>
</dbReference>
<dbReference type="PANTHER" id="PTHR48101">
    <property type="entry name" value="METHYLMALONYL-COA MUTASE, MITOCHONDRIAL-RELATED"/>
    <property type="match status" value="1"/>
</dbReference>
<dbReference type="Pfam" id="PF02310">
    <property type="entry name" value="B12-binding"/>
    <property type="match status" value="1"/>
</dbReference>
<dbReference type="Pfam" id="PF01642">
    <property type="entry name" value="MM_CoA_mutase"/>
    <property type="match status" value="1"/>
</dbReference>
<dbReference type="SUPFAM" id="SSF52242">
    <property type="entry name" value="Cobalamin (vitamin B12)-binding domain"/>
    <property type="match status" value="1"/>
</dbReference>
<dbReference type="SUPFAM" id="SSF51703">
    <property type="entry name" value="Cobalamin (vitamin B12)-dependent enzymes"/>
    <property type="match status" value="1"/>
</dbReference>
<dbReference type="PROSITE" id="PS51332">
    <property type="entry name" value="B12_BINDING"/>
    <property type="match status" value="1"/>
</dbReference>
<dbReference type="PROSITE" id="PS00544">
    <property type="entry name" value="METMALONYL_COA_MUTASE"/>
    <property type="match status" value="1"/>
</dbReference>
<protein>
    <recommendedName>
        <fullName>Methylmalonyl-CoA mutase, mitochondrial</fullName>
        <shortName>MCM</shortName>
        <ecNumber evidence="2">5.4.99.2</ecNumber>
    </recommendedName>
    <alternativeName>
        <fullName>Methylmalonyl-CoA isomerase</fullName>
    </alternativeName>
</protein>
<accession>Q9GK13</accession>
<reference key="1">
    <citation type="thesis" date="1998" institute="University of Karlsruhe" country="Germany">
        <authorList>
            <person name="Buckel T."/>
        </authorList>
    </citation>
    <scope>NUCLEOTIDE SEQUENCE [MRNA]</scope>
    <source>
        <tissue>Liver</tissue>
    </source>
</reference>
<proteinExistence type="evidence at transcript level"/>
<name>MUTA_BOVIN</name>